<keyword id="KW-0413">Isomerase</keyword>
<keyword id="KW-1185">Reference proteome</keyword>
<keyword id="KW-0819">tRNA processing</keyword>
<reference key="1">
    <citation type="journal article" date="2002" name="Proc. Natl. Acad. Sci. U.S.A.">
        <title>Genome sequence of Streptococcus mutans UA159, a cariogenic dental pathogen.</title>
        <authorList>
            <person name="Ajdic D.J."/>
            <person name="McShan W.M."/>
            <person name="McLaughlin R.E."/>
            <person name="Savic G."/>
            <person name="Chang J."/>
            <person name="Carson M.B."/>
            <person name="Primeaux C."/>
            <person name="Tian R."/>
            <person name="Kenton S."/>
            <person name="Jia H.G."/>
            <person name="Lin S.P."/>
            <person name="Qian Y."/>
            <person name="Li S."/>
            <person name="Zhu H."/>
            <person name="Najar F.Z."/>
            <person name="Lai H."/>
            <person name="White J."/>
            <person name="Roe B.A."/>
            <person name="Ferretti J.J."/>
        </authorList>
    </citation>
    <scope>NUCLEOTIDE SEQUENCE [LARGE SCALE GENOMIC DNA]</scope>
    <source>
        <strain>ATCC 700610 / UA159</strain>
    </source>
</reference>
<dbReference type="EC" id="5.4.99.12" evidence="1"/>
<dbReference type="EMBL" id="AE014133">
    <property type="protein sequence ID" value="AAN57869.1"/>
    <property type="molecule type" value="Genomic_DNA"/>
</dbReference>
<dbReference type="RefSeq" id="NP_720563.1">
    <property type="nucleotide sequence ID" value="NC_004350.2"/>
</dbReference>
<dbReference type="RefSeq" id="WP_002263419.1">
    <property type="nucleotide sequence ID" value="NC_004350.2"/>
</dbReference>
<dbReference type="SMR" id="Q8DWH1"/>
<dbReference type="STRING" id="210007.SMU_84"/>
<dbReference type="KEGG" id="smu:SMU_84"/>
<dbReference type="PATRIC" id="fig|210007.7.peg.73"/>
<dbReference type="eggNOG" id="COG0101">
    <property type="taxonomic scope" value="Bacteria"/>
</dbReference>
<dbReference type="HOGENOM" id="CLU_014673_0_1_9"/>
<dbReference type="OrthoDB" id="9811823at2"/>
<dbReference type="PhylomeDB" id="Q8DWH1"/>
<dbReference type="Proteomes" id="UP000002512">
    <property type="component" value="Chromosome"/>
</dbReference>
<dbReference type="GO" id="GO:0003723">
    <property type="term" value="F:RNA binding"/>
    <property type="evidence" value="ECO:0007669"/>
    <property type="project" value="InterPro"/>
</dbReference>
<dbReference type="GO" id="GO:0160147">
    <property type="term" value="F:tRNA pseudouridine(38-40) synthase activity"/>
    <property type="evidence" value="ECO:0007669"/>
    <property type="project" value="UniProtKB-EC"/>
</dbReference>
<dbReference type="GO" id="GO:0031119">
    <property type="term" value="P:tRNA pseudouridine synthesis"/>
    <property type="evidence" value="ECO:0007669"/>
    <property type="project" value="UniProtKB-UniRule"/>
</dbReference>
<dbReference type="CDD" id="cd02570">
    <property type="entry name" value="PseudoU_synth_EcTruA"/>
    <property type="match status" value="1"/>
</dbReference>
<dbReference type="FunFam" id="3.30.70.580:FF:000001">
    <property type="entry name" value="tRNA pseudouridine synthase A"/>
    <property type="match status" value="1"/>
</dbReference>
<dbReference type="Gene3D" id="3.30.70.660">
    <property type="entry name" value="Pseudouridine synthase I, catalytic domain, C-terminal subdomain"/>
    <property type="match status" value="1"/>
</dbReference>
<dbReference type="Gene3D" id="3.30.70.580">
    <property type="entry name" value="Pseudouridine synthase I, catalytic domain, N-terminal subdomain"/>
    <property type="match status" value="1"/>
</dbReference>
<dbReference type="HAMAP" id="MF_00171">
    <property type="entry name" value="TruA"/>
    <property type="match status" value="1"/>
</dbReference>
<dbReference type="InterPro" id="IPR020103">
    <property type="entry name" value="PsdUridine_synth_cat_dom_sf"/>
</dbReference>
<dbReference type="InterPro" id="IPR001406">
    <property type="entry name" value="PsdUridine_synth_TruA"/>
</dbReference>
<dbReference type="InterPro" id="IPR020097">
    <property type="entry name" value="PsdUridine_synth_TruA_a/b_dom"/>
</dbReference>
<dbReference type="InterPro" id="IPR020095">
    <property type="entry name" value="PsdUridine_synth_TruA_C"/>
</dbReference>
<dbReference type="InterPro" id="IPR020094">
    <property type="entry name" value="TruA/RsuA/RluB/E/F_N"/>
</dbReference>
<dbReference type="NCBIfam" id="TIGR00071">
    <property type="entry name" value="hisT_truA"/>
    <property type="match status" value="1"/>
</dbReference>
<dbReference type="PANTHER" id="PTHR11142">
    <property type="entry name" value="PSEUDOURIDYLATE SYNTHASE"/>
    <property type="match status" value="1"/>
</dbReference>
<dbReference type="PANTHER" id="PTHR11142:SF0">
    <property type="entry name" value="TRNA PSEUDOURIDINE SYNTHASE-LIKE 1"/>
    <property type="match status" value="1"/>
</dbReference>
<dbReference type="Pfam" id="PF01416">
    <property type="entry name" value="PseudoU_synth_1"/>
    <property type="match status" value="2"/>
</dbReference>
<dbReference type="PIRSF" id="PIRSF001430">
    <property type="entry name" value="tRNA_psdUrid_synth"/>
    <property type="match status" value="1"/>
</dbReference>
<dbReference type="SUPFAM" id="SSF55120">
    <property type="entry name" value="Pseudouridine synthase"/>
    <property type="match status" value="1"/>
</dbReference>
<proteinExistence type="inferred from homology"/>
<comment type="function">
    <text evidence="1">Formation of pseudouridine at positions 38, 39 and 40 in the anticodon stem and loop of transfer RNAs.</text>
</comment>
<comment type="catalytic activity">
    <reaction evidence="1">
        <text>uridine(38/39/40) in tRNA = pseudouridine(38/39/40) in tRNA</text>
        <dbReference type="Rhea" id="RHEA:22376"/>
        <dbReference type="Rhea" id="RHEA-COMP:10085"/>
        <dbReference type="Rhea" id="RHEA-COMP:10087"/>
        <dbReference type="ChEBI" id="CHEBI:65314"/>
        <dbReference type="ChEBI" id="CHEBI:65315"/>
        <dbReference type="EC" id="5.4.99.12"/>
    </reaction>
</comment>
<comment type="subunit">
    <text evidence="1">Homodimer.</text>
</comment>
<comment type="similarity">
    <text evidence="1">Belongs to the tRNA pseudouridine synthase TruA family.</text>
</comment>
<evidence type="ECO:0000255" key="1">
    <source>
        <dbReference type="HAMAP-Rule" id="MF_00171"/>
    </source>
</evidence>
<organism>
    <name type="scientific">Streptococcus mutans serotype c (strain ATCC 700610 / UA159)</name>
    <dbReference type="NCBI Taxonomy" id="210007"/>
    <lineage>
        <taxon>Bacteria</taxon>
        <taxon>Bacillati</taxon>
        <taxon>Bacillota</taxon>
        <taxon>Bacilli</taxon>
        <taxon>Lactobacillales</taxon>
        <taxon>Streptococcaceae</taxon>
        <taxon>Streptococcus</taxon>
    </lineage>
</organism>
<gene>
    <name evidence="1" type="primary">truA</name>
    <name type="ordered locus">SMU_84</name>
</gene>
<feature type="chain" id="PRO_0000057461" description="tRNA pseudouridine synthase A">
    <location>
        <begin position="1"/>
        <end position="249"/>
    </location>
</feature>
<feature type="active site" description="Nucleophile" evidence="1">
    <location>
        <position position="53"/>
    </location>
</feature>
<feature type="binding site" evidence="1">
    <location>
        <position position="111"/>
    </location>
    <ligand>
        <name>substrate</name>
    </ligand>
</feature>
<protein>
    <recommendedName>
        <fullName evidence="1">tRNA pseudouridine synthase A</fullName>
        <ecNumber evidence="1">5.4.99.12</ecNumber>
    </recommendedName>
    <alternativeName>
        <fullName evidence="1">tRNA pseudouridine(38-40) synthase</fullName>
    </alternativeName>
    <alternativeName>
        <fullName evidence="1">tRNA pseudouridylate synthase I</fullName>
    </alternativeName>
    <alternativeName>
        <fullName evidence="1">tRNA-uridine isomerase I</fullName>
    </alternativeName>
</protein>
<sequence>MIRYKAIISYDGTNFSGFQRQPQVRTVQEEIEKTLLRLNSGQAVKIHGAGRTDAGVHAYGQVIHFDLPQQRDLEKLRFGLDTQTPDDIDVIQVEQVADDFHARYQKHRKTYEFLVDLGRPKNPLMRHYATHFPYKVDFSVVKAAIKKLRGTHDFTGFTASGTSVENKVRTISRATVEKDDKTGFLIFTFTGSGFLYKQVRNMVGTLLKIGNGRMPIDQIDRILESGDRSLAGPTAASNGLYLKEIIYDD</sequence>
<accession>Q8DWH1</accession>
<name>TRUA_STRMU</name>